<name>PSBM_PLALA</name>
<reference key="1">
    <citation type="journal article" date="2004" name="Proc. Natl. Acad. Sci. U.S.A.">
        <title>Mitochondrial substitution rates are extraordinarily elevated and variable in a genus of flowering plants.</title>
        <authorList>
            <person name="Cho Y."/>
            <person name="Mower J.P."/>
            <person name="Qiu Y.L."/>
            <person name="Palmer J.D."/>
        </authorList>
    </citation>
    <scope>NUCLEOTIDE SEQUENCE [GENOMIC DNA]</scope>
</reference>
<proteinExistence type="inferred from homology"/>
<protein>
    <recommendedName>
        <fullName evidence="1">Photosystem II reaction center protein M</fullName>
        <shortName evidence="1">PSII-M</shortName>
    </recommendedName>
</protein>
<keyword id="KW-0150">Chloroplast</keyword>
<keyword id="KW-0472">Membrane</keyword>
<keyword id="KW-0602">Photosynthesis</keyword>
<keyword id="KW-0604">Photosystem II</keyword>
<keyword id="KW-0934">Plastid</keyword>
<keyword id="KW-0674">Reaction center</keyword>
<keyword id="KW-0793">Thylakoid</keyword>
<keyword id="KW-0812">Transmembrane</keyword>
<keyword id="KW-1133">Transmembrane helix</keyword>
<feature type="chain" id="PRO_0000217574" description="Photosystem II reaction center protein M">
    <location>
        <begin position="1"/>
        <end position="34"/>
    </location>
</feature>
<feature type="transmembrane region" description="Helical" evidence="1">
    <location>
        <begin position="5"/>
        <end position="25"/>
    </location>
</feature>
<accession>Q5IBK3</accession>
<organism>
    <name type="scientific">Plantago lanceolata</name>
    <name type="common">English plantain</name>
    <name type="synonym">Ribwort plantain</name>
    <dbReference type="NCBI Taxonomy" id="39414"/>
    <lineage>
        <taxon>Eukaryota</taxon>
        <taxon>Viridiplantae</taxon>
        <taxon>Streptophyta</taxon>
        <taxon>Embryophyta</taxon>
        <taxon>Tracheophyta</taxon>
        <taxon>Spermatophyta</taxon>
        <taxon>Magnoliopsida</taxon>
        <taxon>eudicotyledons</taxon>
        <taxon>Gunneridae</taxon>
        <taxon>Pentapetalae</taxon>
        <taxon>asterids</taxon>
        <taxon>lamiids</taxon>
        <taxon>Lamiales</taxon>
        <taxon>Plantaginaceae</taxon>
        <taxon>Plantagineae</taxon>
        <taxon>Plantago</taxon>
    </lineage>
</organism>
<dbReference type="EMBL" id="AY818926">
    <property type="protein sequence ID" value="AAW33078.1"/>
    <property type="molecule type" value="Genomic_DNA"/>
</dbReference>
<dbReference type="RefSeq" id="YP_010544700.1">
    <property type="nucleotide sequence ID" value="NC_068049.1"/>
</dbReference>
<dbReference type="SMR" id="Q5IBK3"/>
<dbReference type="GeneID" id="76359148"/>
<dbReference type="GO" id="GO:0009535">
    <property type="term" value="C:chloroplast thylakoid membrane"/>
    <property type="evidence" value="ECO:0007669"/>
    <property type="project" value="UniProtKB-SubCell"/>
</dbReference>
<dbReference type="GO" id="GO:0009523">
    <property type="term" value="C:photosystem II"/>
    <property type="evidence" value="ECO:0007669"/>
    <property type="project" value="UniProtKB-KW"/>
</dbReference>
<dbReference type="GO" id="GO:0019684">
    <property type="term" value="P:photosynthesis, light reaction"/>
    <property type="evidence" value="ECO:0007669"/>
    <property type="project" value="InterPro"/>
</dbReference>
<dbReference type="HAMAP" id="MF_00438">
    <property type="entry name" value="PSII_PsbM"/>
    <property type="match status" value="1"/>
</dbReference>
<dbReference type="InterPro" id="IPR007826">
    <property type="entry name" value="PSII_PsbM"/>
</dbReference>
<dbReference type="InterPro" id="IPR037269">
    <property type="entry name" value="PSII_PsbM_sf"/>
</dbReference>
<dbReference type="NCBIfam" id="TIGR03038">
    <property type="entry name" value="PS_II_psbM"/>
    <property type="match status" value="1"/>
</dbReference>
<dbReference type="PANTHER" id="PTHR35774">
    <property type="entry name" value="PHOTOSYSTEM II REACTION CENTER PROTEIN M"/>
    <property type="match status" value="1"/>
</dbReference>
<dbReference type="PANTHER" id="PTHR35774:SF1">
    <property type="entry name" value="PHOTOSYSTEM II REACTION CENTER PROTEIN M"/>
    <property type="match status" value="1"/>
</dbReference>
<dbReference type="Pfam" id="PF05151">
    <property type="entry name" value="PsbM"/>
    <property type="match status" value="1"/>
</dbReference>
<dbReference type="SUPFAM" id="SSF161033">
    <property type="entry name" value="Photosystem II reaction center protein M, PsbM"/>
    <property type="match status" value="1"/>
</dbReference>
<comment type="function">
    <text evidence="1">One of the components of the core complex of photosystem II (PSII). PSII is a light-driven water:plastoquinone oxidoreductase that uses light energy to abstract electrons from H(2)O, generating O(2) and a proton gradient subsequently used for ATP formation. It consists of a core antenna complex that captures photons, and an electron transfer chain that converts photonic excitation into a charge separation. This subunit is found at the monomer-monomer interface.</text>
</comment>
<comment type="subunit">
    <text evidence="1">PSII is composed of 1 copy each of membrane proteins PsbA, PsbB, PsbC, PsbD, PsbE, PsbF, PsbH, PsbI, PsbJ, PsbK, PsbL, PsbM, PsbT, PsbX, PsbY, PsbZ, Psb30/Ycf12, at least 3 peripheral proteins of the oxygen-evolving complex and a large number of cofactors. It forms dimeric complexes.</text>
</comment>
<comment type="subcellular location">
    <subcellularLocation>
        <location evidence="1">Plastid</location>
        <location evidence="1">Chloroplast thylakoid membrane</location>
        <topology evidence="1">Single-pass membrane protein</topology>
    </subcellularLocation>
</comment>
<comment type="similarity">
    <text evidence="1">Belongs to the PsbM family.</text>
</comment>
<evidence type="ECO:0000255" key="1">
    <source>
        <dbReference type="HAMAP-Rule" id="MF_00438"/>
    </source>
</evidence>
<sequence length="34" mass="3783">MEVNILAFIATALFILVPTAFLLIIYVKTVSQND</sequence>
<geneLocation type="chloroplast"/>
<gene>
    <name evidence="1" type="primary">psbM</name>
</gene>